<feature type="chain" id="PRO_0000186613" description="PTS system mannitol-specific EIICBA component">
    <location>
        <begin position="1"/>
        <end position="640"/>
    </location>
</feature>
<feature type="transmembrane region" description="Helical" evidence="1">
    <location>
        <begin position="24"/>
        <end position="45"/>
    </location>
</feature>
<feature type="transmembrane region" description="Helical" evidence="1">
    <location>
        <begin position="50"/>
        <end position="70"/>
    </location>
</feature>
<feature type="transmembrane region" description="Helical" evidence="1">
    <location>
        <begin position="134"/>
        <end position="155"/>
    </location>
</feature>
<feature type="transmembrane region" description="Helical" evidence="1">
    <location>
        <begin position="165"/>
        <end position="185"/>
    </location>
</feature>
<feature type="transmembrane region" description="Helical" evidence="1">
    <location>
        <begin position="273"/>
        <end position="292"/>
    </location>
</feature>
<feature type="transmembrane region" description="Helical" evidence="1">
    <location>
        <begin position="313"/>
        <end position="334"/>
    </location>
</feature>
<feature type="domain" description="PTS EIIC type-2" evidence="4">
    <location>
        <begin position="12"/>
        <end position="343"/>
    </location>
</feature>
<feature type="domain" description="PTS EIIB type-2" evidence="3">
    <location>
        <begin position="379"/>
        <end position="475"/>
    </location>
</feature>
<feature type="domain" description="PTS EIIA type-2" evidence="2">
    <location>
        <begin position="496"/>
        <end position="638"/>
    </location>
</feature>
<feature type="active site" description="Phosphocysteine intermediate; for EIIB activity" evidence="1">
    <location>
        <position position="385"/>
    </location>
</feature>
<feature type="active site" description="Tele-phosphohistidine intermediate; for EIIA activity" evidence="1 2">
    <location>
        <position position="556"/>
    </location>
</feature>
<feature type="site" description="Stabilizes the transition state in the phosphoryl transfer from HPr to EIIA" evidence="1">
    <location>
        <position position="540"/>
    </location>
</feature>
<feature type="modified residue" description="Phosphocysteine; by EIIA" evidence="1 3">
    <location>
        <position position="385"/>
    </location>
</feature>
<feature type="modified residue" description="Phosphohistidine; by HPr" evidence="1">
    <location>
        <position position="556"/>
    </location>
</feature>
<gene>
    <name type="primary">mtlA</name>
    <name type="ordered locus">bbp_517</name>
</gene>
<organism>
    <name type="scientific">Buchnera aphidicola subsp. Baizongia pistaciae (strain Bp)</name>
    <dbReference type="NCBI Taxonomy" id="224915"/>
    <lineage>
        <taxon>Bacteria</taxon>
        <taxon>Pseudomonadati</taxon>
        <taxon>Pseudomonadota</taxon>
        <taxon>Gammaproteobacteria</taxon>
        <taxon>Enterobacterales</taxon>
        <taxon>Erwiniaceae</taxon>
        <taxon>Buchnera</taxon>
    </lineage>
</organism>
<sequence>MSVPMTVKVQNLGRFLSAMIMPNISVFIAWGIISGLFIKSGWCPNQTLEKVLSPISVYLFPILIANTGGYLINGKRGAIVGSIAVVGAIISTAIPMLLGAMIIGPIGGWITYYFDKISKYKVKSGFEMLVNNFSVGILGVLLLFISFLCIGPMIEKLSCFLGYVVNLMINNHLLPFIAILIEPAKIFFLNNVINHGVLFPLGIQEVVKFNKSIFFLIESNPGPGIGVLMAWFFFGCDNIKKSLKEAIVIQLFGGIHEIYFPYVLKNPRLILALILGSITGIFILIVLRGGLISAASPGSIISILAMTPKGLYVINLLAIIISFLVSFLVSCMLLKISNRNHYVKGSNTKIEKDNFLINSSFQKNRTCIKSSLDSHKCIRNIIFACDAGMGSSAVAAGILRNKIHDLNIFNITVSNAAIDSIPNFGVDLIITHYSLTDRARKRNSNAKHLSLNSFLDNAFYNELSKYLVENNLDNNSSILDFSVRNQNNFSSKKNVFSLTKENIFLGQIASSKEEVIRFIGRQLVNQGYVKEEYIEAMLEREKMMSTWLGESIALPHGTIQSKDFILNTGIIFCQFPNGILFGDDPEDIAHLVIGVAARNNEHIPVVSNITNILDNNDVIKSLSITKNIDDVLYLFSRKNI</sequence>
<proteinExistence type="inferred from homology"/>
<protein>
    <recommendedName>
        <fullName evidence="1">PTS system mannitol-specific EIICBA component</fullName>
    </recommendedName>
    <alternativeName>
        <fullName evidence="1">EIICBA-Mtl</fullName>
        <shortName evidence="1">EII-Mtl</shortName>
    </alternativeName>
    <domain>
        <recommendedName>
            <fullName evidence="1">Mannitol permease IIC component</fullName>
        </recommendedName>
        <alternativeName>
            <fullName evidence="1">PTS system mannitol-specific EIIC component</fullName>
        </alternativeName>
    </domain>
    <domain>
        <recommendedName>
            <fullName evidence="1">Mannitol-specific phosphotransferase enzyme IIB component</fullName>
            <ecNumber evidence="1">2.7.1.197</ecNumber>
        </recommendedName>
        <alternativeName>
            <fullName evidence="1">PTS system mannitol-specific EIIB component</fullName>
        </alternativeName>
    </domain>
    <domain>
        <recommendedName>
            <fullName evidence="1">Mannitol-specific phosphotransferase enzyme IIA component</fullName>
        </recommendedName>
        <alternativeName>
            <fullName evidence="1">PTS system mannitol-specific EIIA component</fullName>
        </alternativeName>
    </domain>
</protein>
<reference key="1">
    <citation type="journal article" date="2003" name="Proc. Natl. Acad. Sci. U.S.A.">
        <title>Reductive genome evolution in Buchnera aphidicola.</title>
        <authorList>
            <person name="van Ham R.C.H.J."/>
            <person name="Kamerbeek J."/>
            <person name="Palacios C."/>
            <person name="Rausell C."/>
            <person name="Abascal F."/>
            <person name="Bastolla U."/>
            <person name="Fernandez J.M."/>
            <person name="Jimenez L."/>
            <person name="Postigo M."/>
            <person name="Silva F.J."/>
            <person name="Tamames J."/>
            <person name="Viguera E."/>
            <person name="Latorre A."/>
            <person name="Valencia A."/>
            <person name="Moran F."/>
            <person name="Moya A."/>
        </authorList>
    </citation>
    <scope>NUCLEOTIDE SEQUENCE [LARGE SCALE GENOMIC DNA]</scope>
    <source>
        <strain>Bp</strain>
    </source>
</reference>
<name>PTM3C_BUCBP</name>
<accession>Q89A36</accession>
<keyword id="KW-0997">Cell inner membrane</keyword>
<keyword id="KW-1003">Cell membrane</keyword>
<keyword id="KW-0418">Kinase</keyword>
<keyword id="KW-0472">Membrane</keyword>
<keyword id="KW-0597">Phosphoprotein</keyword>
<keyword id="KW-0598">Phosphotransferase system</keyword>
<keyword id="KW-1185">Reference proteome</keyword>
<keyword id="KW-0762">Sugar transport</keyword>
<keyword id="KW-0808">Transferase</keyword>
<keyword id="KW-0812">Transmembrane</keyword>
<keyword id="KW-1133">Transmembrane helix</keyword>
<keyword id="KW-0813">Transport</keyword>
<evidence type="ECO:0000250" key="1">
    <source>
        <dbReference type="UniProtKB" id="P00550"/>
    </source>
</evidence>
<evidence type="ECO:0000255" key="2">
    <source>
        <dbReference type="PROSITE-ProRule" id="PRU00417"/>
    </source>
</evidence>
<evidence type="ECO:0000255" key="3">
    <source>
        <dbReference type="PROSITE-ProRule" id="PRU00422"/>
    </source>
</evidence>
<evidence type="ECO:0000255" key="4">
    <source>
        <dbReference type="PROSITE-ProRule" id="PRU00427"/>
    </source>
</evidence>
<comment type="function">
    <text evidence="1">The phosphoenolpyruvate-dependent sugar phosphotransferase system (sugar PTS), a major carbohydrate active transport system, catalyzes the phosphorylation of incoming sugar substrates concomitantly with their translocation across the cell membrane. This system is involved in D-mannitol transport.</text>
</comment>
<comment type="catalytic activity">
    <reaction evidence="1">
        <text>D-mannitol(out) + N(pros)-phospho-L-histidyl-[protein] = D-mannitol 1-phosphate(in) + L-histidyl-[protein]</text>
        <dbReference type="Rhea" id="RHEA:33363"/>
        <dbReference type="Rhea" id="RHEA-COMP:9745"/>
        <dbReference type="Rhea" id="RHEA-COMP:9746"/>
        <dbReference type="ChEBI" id="CHEBI:16899"/>
        <dbReference type="ChEBI" id="CHEBI:29979"/>
        <dbReference type="ChEBI" id="CHEBI:61381"/>
        <dbReference type="ChEBI" id="CHEBI:64837"/>
        <dbReference type="EC" id="2.7.1.197"/>
    </reaction>
</comment>
<comment type="subunit">
    <text evidence="1">Homodimer.</text>
</comment>
<comment type="subcellular location">
    <subcellularLocation>
        <location evidence="1 4">Cell inner membrane</location>
        <topology evidence="1 4">Multi-pass membrane protein</topology>
    </subcellularLocation>
</comment>
<comment type="induction">
    <text evidence="1">Induced by mannitol. Repressed by MltR.</text>
</comment>
<comment type="domain">
    <text evidence="4">The EIIC type-2 domain forms the PTS system translocation channel and contains the specific substrate-binding site.</text>
</comment>
<comment type="domain">
    <text evidence="3">The PTS EIIB type-2 domain is phosphorylated by phospho-EIIA on a cysteinyl residue. Then, it transfers the phosphoryl group to the sugar substrate concomitantly with the sugar uptake processed by the PTS EIIC type-2 domain.</text>
</comment>
<comment type="domain">
    <text evidence="2">The PTS EIIA type-2 domain is phosphorylated by phospho-HPr on a histidyl residue. Then, it transfers the phosphoryl group to the PTS EIIB type-2 domain.</text>
</comment>
<comment type="PTM">
    <text evidence="1">An intramolecular phosphotransfer takes places between His-556 and Cys-385.</text>
</comment>
<dbReference type="EC" id="2.7.1.197" evidence="1"/>
<dbReference type="EMBL" id="AE016826">
    <property type="protein sequence ID" value="AAO27220.1"/>
    <property type="molecule type" value="Genomic_DNA"/>
</dbReference>
<dbReference type="RefSeq" id="WP_011091621.1">
    <property type="nucleotide sequence ID" value="NC_004545.1"/>
</dbReference>
<dbReference type="SMR" id="Q89A36"/>
<dbReference type="STRING" id="224915.bbp_517"/>
<dbReference type="KEGG" id="bab:bbp_517"/>
<dbReference type="eggNOG" id="COG2213">
    <property type="taxonomic scope" value="Bacteria"/>
</dbReference>
<dbReference type="eggNOG" id="COG4668">
    <property type="taxonomic scope" value="Bacteria"/>
</dbReference>
<dbReference type="HOGENOM" id="CLU_028721_1_0_6"/>
<dbReference type="OrthoDB" id="9814222at2"/>
<dbReference type="Proteomes" id="UP000000601">
    <property type="component" value="Chromosome"/>
</dbReference>
<dbReference type="GO" id="GO:0005886">
    <property type="term" value="C:plasma membrane"/>
    <property type="evidence" value="ECO:0007669"/>
    <property type="project" value="UniProtKB-SubCell"/>
</dbReference>
<dbReference type="GO" id="GO:0016301">
    <property type="term" value="F:kinase activity"/>
    <property type="evidence" value="ECO:0007669"/>
    <property type="project" value="UniProtKB-KW"/>
</dbReference>
<dbReference type="GO" id="GO:0022872">
    <property type="term" value="F:protein-N(PI)-phosphohistidine-mannitol phosphotransferase system transmembrane transporter activity"/>
    <property type="evidence" value="ECO:0007669"/>
    <property type="project" value="InterPro"/>
</dbReference>
<dbReference type="GO" id="GO:0090563">
    <property type="term" value="F:protein-phosphocysteine-sugar phosphotransferase activity"/>
    <property type="evidence" value="ECO:0007669"/>
    <property type="project" value="TreeGrafter"/>
</dbReference>
<dbReference type="GO" id="GO:0009401">
    <property type="term" value="P:phosphoenolpyruvate-dependent sugar phosphotransferase system"/>
    <property type="evidence" value="ECO:0007669"/>
    <property type="project" value="UniProtKB-KW"/>
</dbReference>
<dbReference type="CDD" id="cd00211">
    <property type="entry name" value="PTS_IIA_fru"/>
    <property type="match status" value="1"/>
</dbReference>
<dbReference type="CDD" id="cd05567">
    <property type="entry name" value="PTS_IIB_mannitol"/>
    <property type="match status" value="1"/>
</dbReference>
<dbReference type="Gene3D" id="3.40.50.2300">
    <property type="match status" value="1"/>
</dbReference>
<dbReference type="Gene3D" id="3.40.930.10">
    <property type="entry name" value="Mannitol-specific EII, Chain A"/>
    <property type="match status" value="1"/>
</dbReference>
<dbReference type="InterPro" id="IPR016152">
    <property type="entry name" value="PTrfase/Anion_transptr"/>
</dbReference>
<dbReference type="InterPro" id="IPR002178">
    <property type="entry name" value="PTS_EIIA_type-2_dom"/>
</dbReference>
<dbReference type="InterPro" id="IPR036095">
    <property type="entry name" value="PTS_EIIB-like_sf"/>
</dbReference>
<dbReference type="InterPro" id="IPR013011">
    <property type="entry name" value="PTS_EIIB_2"/>
</dbReference>
<dbReference type="InterPro" id="IPR003501">
    <property type="entry name" value="PTS_EIIB_2/3"/>
</dbReference>
<dbReference type="InterPro" id="IPR029503">
    <property type="entry name" value="PTS_EIIB_mannitol"/>
</dbReference>
<dbReference type="InterPro" id="IPR003352">
    <property type="entry name" value="PTS_EIIC"/>
</dbReference>
<dbReference type="InterPro" id="IPR013014">
    <property type="entry name" value="PTS_EIIC_2"/>
</dbReference>
<dbReference type="InterPro" id="IPR050893">
    <property type="entry name" value="Sugar_PTS"/>
</dbReference>
<dbReference type="NCBIfam" id="NF011663">
    <property type="entry name" value="PRK15083.1"/>
    <property type="match status" value="1"/>
</dbReference>
<dbReference type="PANTHER" id="PTHR30181">
    <property type="entry name" value="MANNITOL PERMEASE IIC COMPONENT"/>
    <property type="match status" value="1"/>
</dbReference>
<dbReference type="PANTHER" id="PTHR30181:SF2">
    <property type="entry name" value="PTS SYSTEM MANNITOL-SPECIFIC EIICBA COMPONENT"/>
    <property type="match status" value="1"/>
</dbReference>
<dbReference type="Pfam" id="PF00359">
    <property type="entry name" value="PTS_EIIA_2"/>
    <property type="match status" value="1"/>
</dbReference>
<dbReference type="Pfam" id="PF02378">
    <property type="entry name" value="PTS_EIIC"/>
    <property type="match status" value="1"/>
</dbReference>
<dbReference type="Pfam" id="PF02302">
    <property type="entry name" value="PTS_IIB"/>
    <property type="match status" value="1"/>
</dbReference>
<dbReference type="SUPFAM" id="SSF55804">
    <property type="entry name" value="Phoshotransferase/anion transport protein"/>
    <property type="match status" value="1"/>
</dbReference>
<dbReference type="SUPFAM" id="SSF52794">
    <property type="entry name" value="PTS system IIB component-like"/>
    <property type="match status" value="1"/>
</dbReference>
<dbReference type="PROSITE" id="PS51094">
    <property type="entry name" value="PTS_EIIA_TYPE_2"/>
    <property type="match status" value="1"/>
</dbReference>
<dbReference type="PROSITE" id="PS00372">
    <property type="entry name" value="PTS_EIIA_TYPE_2_HIS"/>
    <property type="match status" value="1"/>
</dbReference>
<dbReference type="PROSITE" id="PS51099">
    <property type="entry name" value="PTS_EIIB_TYPE_2"/>
    <property type="match status" value="1"/>
</dbReference>
<dbReference type="PROSITE" id="PS51104">
    <property type="entry name" value="PTS_EIIC_TYPE_2"/>
    <property type="match status" value="1"/>
</dbReference>